<reference key="1">
    <citation type="journal article" date="1990" name="J. Virol.">
        <title>Evolution of the nucleoprotein gene of influenza A virus.</title>
        <authorList>
            <person name="Gorman O.T."/>
            <person name="Bean W.J."/>
            <person name="Kawaoka Y."/>
            <person name="Webster R.G."/>
        </authorList>
    </citation>
    <scope>NUCLEOTIDE SEQUENCE [GENOMIC RNA]</scope>
</reference>
<reference key="2">
    <citation type="submission" date="1990-07" db="EMBL/GenBank/DDBJ databases">
        <authorList>
            <person name="Gorman O.T."/>
        </authorList>
    </citation>
    <scope>SEQUENCE REVISION TO 236-237</scope>
</reference>
<dbReference type="EMBL" id="M30748">
    <property type="protein sequence ID" value="AAA43455.1"/>
    <property type="molecule type" value="Genomic_RNA"/>
</dbReference>
<dbReference type="SMR" id="P15679"/>
<dbReference type="GO" id="GO:0019029">
    <property type="term" value="C:helical viral capsid"/>
    <property type="evidence" value="ECO:0007669"/>
    <property type="project" value="UniProtKB-UniRule"/>
</dbReference>
<dbReference type="GO" id="GO:0043657">
    <property type="term" value="C:host cell"/>
    <property type="evidence" value="ECO:0007669"/>
    <property type="project" value="GOC"/>
</dbReference>
<dbReference type="GO" id="GO:0042025">
    <property type="term" value="C:host cell nucleus"/>
    <property type="evidence" value="ECO:0007669"/>
    <property type="project" value="UniProtKB-SubCell"/>
</dbReference>
<dbReference type="GO" id="GO:1990904">
    <property type="term" value="C:ribonucleoprotein complex"/>
    <property type="evidence" value="ECO:0007669"/>
    <property type="project" value="UniProtKB-KW"/>
</dbReference>
<dbReference type="GO" id="GO:0019013">
    <property type="term" value="C:viral nucleocapsid"/>
    <property type="evidence" value="ECO:0007669"/>
    <property type="project" value="UniProtKB-UniRule"/>
</dbReference>
<dbReference type="GO" id="GO:0003723">
    <property type="term" value="F:RNA binding"/>
    <property type="evidence" value="ECO:0007669"/>
    <property type="project" value="UniProtKB-UniRule"/>
</dbReference>
<dbReference type="GO" id="GO:0005198">
    <property type="term" value="F:structural molecule activity"/>
    <property type="evidence" value="ECO:0007669"/>
    <property type="project" value="UniProtKB-UniRule"/>
</dbReference>
<dbReference type="GO" id="GO:0046718">
    <property type="term" value="P:symbiont entry into host cell"/>
    <property type="evidence" value="ECO:0007669"/>
    <property type="project" value="UniProtKB-KW"/>
</dbReference>
<dbReference type="GO" id="GO:0075732">
    <property type="term" value="P:viral penetration into host nucleus"/>
    <property type="evidence" value="ECO:0007669"/>
    <property type="project" value="UniProtKB-UniRule"/>
</dbReference>
<dbReference type="HAMAP" id="MF_04070">
    <property type="entry name" value="INFV_NCAP"/>
    <property type="match status" value="1"/>
</dbReference>
<dbReference type="InterPro" id="IPR002141">
    <property type="entry name" value="Flu_NP"/>
</dbReference>
<dbReference type="Pfam" id="PF00506">
    <property type="entry name" value="Flu_NP"/>
    <property type="match status" value="1"/>
</dbReference>
<dbReference type="SUPFAM" id="SSF161003">
    <property type="entry name" value="flu NP-like"/>
    <property type="match status" value="1"/>
</dbReference>
<gene>
    <name evidence="1" type="primary">NP</name>
</gene>
<organism>
    <name type="scientific">Influenza A virus (strain A/Swine/Tennessee/24/1977 H1N1)</name>
    <dbReference type="NCBI Taxonomy" id="385606"/>
    <lineage>
        <taxon>Viruses</taxon>
        <taxon>Riboviria</taxon>
        <taxon>Orthornavirae</taxon>
        <taxon>Negarnaviricota</taxon>
        <taxon>Polyploviricotina</taxon>
        <taxon>Insthoviricetes</taxon>
        <taxon>Articulavirales</taxon>
        <taxon>Orthomyxoviridae</taxon>
        <taxon>Alphainfluenzavirus</taxon>
        <taxon>Alphainfluenzavirus influenzae</taxon>
        <taxon>Influenza A virus</taxon>
    </lineage>
</organism>
<name>NCAP_I77AC</name>
<comment type="function">
    <text evidence="1">Encapsidates the negative strand viral RNA, protecting it from nucleases. The encapsidated genomic RNA is termed the ribonucleoprotein (RNP) and serves as template for transcription and replication. The RNP needs to be localized in the host nucleus to start an infectious cycle, but is too large to diffuse through the nuclear pore complex. NP comprises at least 2 nuclear localization signals that are responsible for the active RNP import into the nucleus through cellular importin alpha/beta pathway. Later in the infection, nclear export of RNPs are mediated through viral proteins NEP interacting with M1 which binds nucleoproteins. It is possible that nucleoprotein binds directly host exportin-1/XPO1 and plays an active role in RNPs nuclear export. M1 interaction with RNP seems to hide nucleoprotein's nuclear localization signals. Soon after a virion infects a new cell, M1 dissociates from the RNP under acidification of the virion driven by M2 protein. Dissociation of M1 from RNP unmasks nucleoprotein's nuclear localization signals, targeting the RNP to the nucleus.</text>
</comment>
<comment type="subunit">
    <text evidence="1">Homomultimerizes to form the nucleocapsid. May bind host exportin-1/XPO1. Binds to viral genomic RNA. Protein-RNA contacts are mediated by a combination of electrostatic interactions between positively charged residues and the phosphate backbone and planar interactions between aromatic side chains and bases.</text>
</comment>
<comment type="subcellular location">
    <subcellularLocation>
        <location evidence="1">Virion</location>
    </subcellularLocation>
    <subcellularLocation>
        <location evidence="1">Host nucleus</location>
    </subcellularLocation>
</comment>
<comment type="PTM">
    <text evidence="1">Late in virus-infected cells, may be cleaved from a 56-kDa protein to a 53-kDa protein by a cellular caspase. This cleavage might be a marker for the onset of apoptosis in infected cells or have a specific function in virus host interaction.</text>
</comment>
<comment type="similarity">
    <text evidence="1">Belongs to the influenza viruses nucleoprotein family.</text>
</comment>
<evidence type="ECO:0000255" key="1">
    <source>
        <dbReference type="HAMAP-Rule" id="MF_04070"/>
    </source>
</evidence>
<evidence type="ECO:0000256" key="2">
    <source>
        <dbReference type="SAM" id="MobiDB-lite"/>
    </source>
</evidence>
<accession>P15679</accession>
<proteinExistence type="inferred from homology"/>
<feature type="chain" id="PRO_0000079136" description="Nucleoprotein">
    <location>
        <begin position="1"/>
        <end position="498"/>
    </location>
</feature>
<feature type="region of interest" description="Disordered" evidence="2">
    <location>
        <begin position="1"/>
        <end position="22"/>
    </location>
</feature>
<feature type="short sequence motif" description="Unconventional nuclear localization signal" evidence="1">
    <location>
        <begin position="1"/>
        <end position="18"/>
    </location>
</feature>
<feature type="short sequence motif" description="Bipartite nuclear localization signal" evidence="1">
    <location>
        <begin position="198"/>
        <end position="216"/>
    </location>
</feature>
<feature type="compositionally biased region" description="Basic and acidic residues" evidence="2">
    <location>
        <begin position="8"/>
        <end position="22"/>
    </location>
</feature>
<sequence>MASQGTKRSYEQMETGGERQDATEIRASVGRMIGGIGRFYIQMCTELKLSDYEGRLIQNSITIERMVLSAFDERRNKYLEEHPSAGKDPKKTGGPIYRRVDGKWMRELILYDKEEIRRVWRQANNGEDATAGLTHIMIWHSNLNDATYQRTRALVRTGMDPRMCSLMQGSTLPRRSGAAGAAVKGVGTIAMELIRMIKRGINDRNFWRGENGRRTRIAYERMCNILKGKFQTAAQRAMMDQVRESRNPGNAEIEDLIFLARSALILRGSVAHKSCLPACVYGLAVASGHDFEREGYSLVGIDPFKLLQNSQVFSLIRPNENPAHKSQLVWMACHSAAFEDLRVSGFIRGKKVVPRGKLSTRGVQIASNENVEAMDSSTLELRSRYWAIRTRSGGNTNQQKASAGQISVQPTFSVQRNLPFERATVMAAFIGNNEGRTSDMRTEIIRMMESAKPEDLSFQGRGVFELSDEKATNPIVPSFDMNNEGSYFFGDNAEEYDN</sequence>
<keyword id="KW-0167">Capsid protein</keyword>
<keyword id="KW-1139">Helical capsid protein</keyword>
<keyword id="KW-1048">Host nucleus</keyword>
<keyword id="KW-0945">Host-virus interaction</keyword>
<keyword id="KW-0687">Ribonucleoprotein</keyword>
<keyword id="KW-0694">RNA-binding</keyword>
<keyword id="KW-0543">Viral nucleoprotein</keyword>
<keyword id="KW-1163">Viral penetration into host nucleus</keyword>
<keyword id="KW-0946">Virion</keyword>
<keyword id="KW-1160">Virus entry into host cell</keyword>
<organismHost>
    <name type="scientific">Aves</name>
    <dbReference type="NCBI Taxonomy" id="8782"/>
</organismHost>
<organismHost>
    <name type="scientific">Homo sapiens</name>
    <name type="common">Human</name>
    <dbReference type="NCBI Taxonomy" id="9606"/>
</organismHost>
<organismHost>
    <name type="scientific">Sus scrofa</name>
    <name type="common">Pig</name>
    <dbReference type="NCBI Taxonomy" id="9823"/>
</organismHost>
<protein>
    <recommendedName>
        <fullName evidence="1">Nucleoprotein</fullName>
    </recommendedName>
    <alternativeName>
        <fullName evidence="1">Nucleocapsid protein</fullName>
        <shortName evidence="1">Protein N</shortName>
    </alternativeName>
</protein>